<organism>
    <name type="scientific">Saccharomyces cerevisiae (strain ATCC 204508 / S288c)</name>
    <name type="common">Baker's yeast</name>
    <dbReference type="NCBI Taxonomy" id="559292"/>
    <lineage>
        <taxon>Eukaryota</taxon>
        <taxon>Fungi</taxon>
        <taxon>Dikarya</taxon>
        <taxon>Ascomycota</taxon>
        <taxon>Saccharomycotina</taxon>
        <taxon>Saccharomycetes</taxon>
        <taxon>Saccharomycetales</taxon>
        <taxon>Saccharomycetaceae</taxon>
        <taxon>Saccharomyces</taxon>
    </lineage>
</organism>
<comment type="catalytic activity">
    <reaction>
        <text>L-seryl-[protein] + ATP = O-phospho-L-seryl-[protein] + ADP + H(+)</text>
        <dbReference type="Rhea" id="RHEA:17989"/>
        <dbReference type="Rhea" id="RHEA-COMP:9863"/>
        <dbReference type="Rhea" id="RHEA-COMP:11604"/>
        <dbReference type="ChEBI" id="CHEBI:15378"/>
        <dbReference type="ChEBI" id="CHEBI:29999"/>
        <dbReference type="ChEBI" id="CHEBI:30616"/>
        <dbReference type="ChEBI" id="CHEBI:83421"/>
        <dbReference type="ChEBI" id="CHEBI:456216"/>
        <dbReference type="EC" id="2.7.11.1"/>
    </reaction>
</comment>
<comment type="catalytic activity">
    <reaction>
        <text>L-threonyl-[protein] + ATP = O-phospho-L-threonyl-[protein] + ADP + H(+)</text>
        <dbReference type="Rhea" id="RHEA:46608"/>
        <dbReference type="Rhea" id="RHEA-COMP:11060"/>
        <dbReference type="Rhea" id="RHEA-COMP:11605"/>
        <dbReference type="ChEBI" id="CHEBI:15378"/>
        <dbReference type="ChEBI" id="CHEBI:30013"/>
        <dbReference type="ChEBI" id="CHEBI:30616"/>
        <dbReference type="ChEBI" id="CHEBI:61977"/>
        <dbReference type="ChEBI" id="CHEBI:456216"/>
        <dbReference type="EC" id="2.7.11.1"/>
    </reaction>
</comment>
<comment type="interaction">
    <interactant intactId="EBI-9664">
        <id>P53233</id>
    </interactant>
    <interactant intactId="EBI-4192">
        <id>Q00684</id>
        <label>CDC14</label>
    </interactant>
    <organismsDiffer>false</organismsDiffer>
    <experiments>2</experiments>
</comment>
<comment type="interaction">
    <interactant intactId="EBI-9664">
        <id>P53233</id>
    </interactant>
    <interactant intactId="EBI-8334">
        <id>P00815</id>
        <label>HIS4</label>
    </interactant>
    <organismsDiffer>false</organismsDiffer>
    <experiments>3</experiments>
</comment>
<comment type="interaction">
    <interactant intactId="EBI-9664">
        <id>P53233</id>
    </interactant>
    <interactant intactId="EBI-19374">
        <id>P35169</id>
        <label>TOR1</label>
    </interactant>
    <organismsDiffer>false</organismsDiffer>
    <experiments>3</experiments>
</comment>
<comment type="subcellular location">
    <subcellularLocation>
        <location evidence="4">Mitochondrion</location>
    </subcellularLocation>
</comment>
<comment type="induction">
    <text evidence="5">By treatment with 8-methoxypsoralen and UVA irradiation.</text>
</comment>
<comment type="miscellaneous">
    <text evidence="3">Present with 339 molecules/cell in log phase SD medium.</text>
</comment>
<comment type="similarity">
    <text evidence="1">Belongs to the protein kinase superfamily. Ser/Thr protein kinase family.</text>
</comment>
<proteinExistence type="evidence at protein level"/>
<reference key="1">
    <citation type="journal article" date="1997" name="Nature">
        <title>The nucleotide sequence of Saccharomyces cerevisiae chromosome VII.</title>
        <authorList>
            <person name="Tettelin H."/>
            <person name="Agostoni-Carbone M.L."/>
            <person name="Albermann K."/>
            <person name="Albers M."/>
            <person name="Arroyo J."/>
            <person name="Backes U."/>
            <person name="Barreiros T."/>
            <person name="Bertani I."/>
            <person name="Bjourson A.J."/>
            <person name="Brueckner M."/>
            <person name="Bruschi C.V."/>
            <person name="Carignani G."/>
            <person name="Castagnoli L."/>
            <person name="Cerdan E."/>
            <person name="Clemente M.L."/>
            <person name="Coblenz A."/>
            <person name="Coglievina M."/>
            <person name="Coissac E."/>
            <person name="Defoor E."/>
            <person name="Del Bino S."/>
            <person name="Delius H."/>
            <person name="Delneri D."/>
            <person name="de Wergifosse P."/>
            <person name="Dujon B."/>
            <person name="Durand P."/>
            <person name="Entian K.-D."/>
            <person name="Eraso P."/>
            <person name="Escribano V."/>
            <person name="Fabiani L."/>
            <person name="Fartmann B."/>
            <person name="Feroli F."/>
            <person name="Feuermann M."/>
            <person name="Frontali L."/>
            <person name="Garcia-Gonzalez M."/>
            <person name="Garcia-Saez M.I."/>
            <person name="Goffeau A."/>
            <person name="Guerreiro P."/>
            <person name="Hani J."/>
            <person name="Hansen M."/>
            <person name="Hebling U."/>
            <person name="Hernandez K."/>
            <person name="Heumann K."/>
            <person name="Hilger F."/>
            <person name="Hofmann B."/>
            <person name="Indge K.J."/>
            <person name="James C.M."/>
            <person name="Klima R."/>
            <person name="Koetter P."/>
            <person name="Kramer B."/>
            <person name="Kramer W."/>
            <person name="Lauquin G."/>
            <person name="Leuther H."/>
            <person name="Louis E.J."/>
            <person name="Maillier E."/>
            <person name="Marconi A."/>
            <person name="Martegani E."/>
            <person name="Mazon M.J."/>
            <person name="Mazzoni C."/>
            <person name="McReynolds A.D.K."/>
            <person name="Melchioretto P."/>
            <person name="Mewes H.-W."/>
            <person name="Minenkova O."/>
            <person name="Mueller-Auer S."/>
            <person name="Nawrocki A."/>
            <person name="Netter P."/>
            <person name="Neu R."/>
            <person name="Nombela C."/>
            <person name="Oliver S.G."/>
            <person name="Panzeri L."/>
            <person name="Paoluzi S."/>
            <person name="Plevani P."/>
            <person name="Portetelle D."/>
            <person name="Portillo F."/>
            <person name="Potier S."/>
            <person name="Purnelle B."/>
            <person name="Rieger M."/>
            <person name="Riles L."/>
            <person name="Rinaldi T."/>
            <person name="Robben J."/>
            <person name="Rodrigues-Pousada C."/>
            <person name="Rodriguez-Belmonte E."/>
            <person name="Rodriguez-Torres A.M."/>
            <person name="Rose M."/>
            <person name="Ruzzi M."/>
            <person name="Saliola M."/>
            <person name="Sanchez-Perez M."/>
            <person name="Schaefer B."/>
            <person name="Schaefer M."/>
            <person name="Scharfe M."/>
            <person name="Schmidheini T."/>
            <person name="Schreer A."/>
            <person name="Skala J."/>
            <person name="Souciet J.-L."/>
            <person name="Steensma H.Y."/>
            <person name="Talla E."/>
            <person name="Thierry A."/>
            <person name="Vandenbol M."/>
            <person name="van der Aart Q.J.M."/>
            <person name="Van Dyck L."/>
            <person name="Vanoni M."/>
            <person name="Verhasselt P."/>
            <person name="Voet M."/>
            <person name="Volckaert G."/>
            <person name="Wambutt R."/>
            <person name="Watson M.D."/>
            <person name="Weber N."/>
            <person name="Wedler E."/>
            <person name="Wedler H."/>
            <person name="Wipfli P."/>
            <person name="Wolf K."/>
            <person name="Wright L.F."/>
            <person name="Zaccaria P."/>
            <person name="Zimmermann M."/>
            <person name="Zollner A."/>
            <person name="Kleine K."/>
        </authorList>
    </citation>
    <scope>NUCLEOTIDE SEQUENCE [LARGE SCALE GENOMIC DNA]</scope>
    <source>
        <strain>ATCC 204508 / S288c</strain>
    </source>
</reference>
<reference key="2">
    <citation type="journal article" date="2014" name="G3 (Bethesda)">
        <title>The reference genome sequence of Saccharomyces cerevisiae: Then and now.</title>
        <authorList>
            <person name="Engel S.R."/>
            <person name="Dietrich F.S."/>
            <person name="Fisk D.G."/>
            <person name="Binkley G."/>
            <person name="Balakrishnan R."/>
            <person name="Costanzo M.C."/>
            <person name="Dwight S.S."/>
            <person name="Hitz B.C."/>
            <person name="Karra K."/>
            <person name="Nash R.S."/>
            <person name="Weng S."/>
            <person name="Wong E.D."/>
            <person name="Lloyd P."/>
            <person name="Skrzypek M.S."/>
            <person name="Miyasato S.R."/>
            <person name="Simison M."/>
            <person name="Cherry J.M."/>
        </authorList>
    </citation>
    <scope>GENOME REANNOTATION</scope>
    <source>
        <strain>ATCC 204508 / S288c</strain>
    </source>
</reference>
<reference key="3">
    <citation type="journal article" date="2003" name="Nature">
        <title>Global analysis of protein expression in yeast.</title>
        <authorList>
            <person name="Ghaemmaghami S."/>
            <person name="Huh W.-K."/>
            <person name="Bower K."/>
            <person name="Howson R.W."/>
            <person name="Belle A."/>
            <person name="Dephoure N."/>
            <person name="O'Shea E.K."/>
            <person name="Weissman J.S."/>
        </authorList>
    </citation>
    <scope>LEVEL OF PROTEIN EXPRESSION [LARGE SCALE ANALYSIS]</scope>
</reference>
<reference key="4">
    <citation type="journal article" date="2003" name="Proc. Natl. Acad. Sci. U.S.A.">
        <title>The proteome of Saccharomyces cerevisiae mitochondria.</title>
        <authorList>
            <person name="Sickmann A."/>
            <person name="Reinders J."/>
            <person name="Wagner Y."/>
            <person name="Joppich C."/>
            <person name="Zahedi R.P."/>
            <person name="Meyer H.E."/>
            <person name="Schoenfisch B."/>
            <person name="Perschil I."/>
            <person name="Chacinska A."/>
            <person name="Guiard B."/>
            <person name="Rehling P."/>
            <person name="Pfanner N."/>
            <person name="Meisinger C."/>
        </authorList>
    </citation>
    <scope>SUBCELLULAR LOCATION [LARGE SCALE ANALYSIS]</scope>
    <source>
        <strain>ATCC 76625 / YPH499</strain>
    </source>
</reference>
<reference key="5">
    <citation type="journal article" date="2007" name="FEMS Yeast Res.">
        <title>Specific transcriptional responses induced by 8-methoxypsoralen and UVA in yeast.</title>
        <authorList>
            <person name="Dardalhon M."/>
            <person name="Lin W."/>
            <person name="Nicolas A."/>
            <person name="Averbeck D."/>
        </authorList>
    </citation>
    <scope>INDUCTION</scope>
</reference>
<protein>
    <recommendedName>
        <fullName>Probable serine/threonine-protein kinase FMP48</fullName>
        <ecNumber>2.7.11.1</ecNumber>
    </recommendedName>
    <alternativeName>
        <fullName>Found in mitochondrial proteome protein 48</fullName>
    </alternativeName>
</protein>
<dbReference type="EC" id="2.7.11.1"/>
<dbReference type="EMBL" id="Z72837">
    <property type="protein sequence ID" value="CAA97052.1"/>
    <property type="molecule type" value="Genomic_DNA"/>
</dbReference>
<dbReference type="EMBL" id="BK006941">
    <property type="protein sequence ID" value="DAA08148.1"/>
    <property type="molecule type" value="Genomic_DNA"/>
</dbReference>
<dbReference type="PIR" id="S64346">
    <property type="entry name" value="S64346"/>
</dbReference>
<dbReference type="RefSeq" id="NP_011566.1">
    <property type="nucleotide sequence ID" value="NM_001181181.1"/>
</dbReference>
<dbReference type="SMR" id="P53233"/>
<dbReference type="BioGRID" id="33297">
    <property type="interactions" value="127"/>
</dbReference>
<dbReference type="DIP" id="DIP-5516N"/>
<dbReference type="FunCoup" id="P53233">
    <property type="interactions" value="422"/>
</dbReference>
<dbReference type="IntAct" id="P53233">
    <property type="interactions" value="37"/>
</dbReference>
<dbReference type="MINT" id="P53233"/>
<dbReference type="STRING" id="4932.YGR052W"/>
<dbReference type="iPTMnet" id="P53233"/>
<dbReference type="PaxDb" id="4932-YGR052W"/>
<dbReference type="PeptideAtlas" id="P53233"/>
<dbReference type="EnsemblFungi" id="YGR052W_mRNA">
    <property type="protein sequence ID" value="YGR052W"/>
    <property type="gene ID" value="YGR052W"/>
</dbReference>
<dbReference type="GeneID" id="852943"/>
<dbReference type="KEGG" id="sce:YGR052W"/>
<dbReference type="AGR" id="SGD:S000003284"/>
<dbReference type="SGD" id="S000003284">
    <property type="gene designation" value="FMP48"/>
</dbReference>
<dbReference type="VEuPathDB" id="FungiDB:YGR052W"/>
<dbReference type="eggNOG" id="KOG0583">
    <property type="taxonomic scope" value="Eukaryota"/>
</dbReference>
<dbReference type="GeneTree" id="ENSGT00940000173298"/>
<dbReference type="HOGENOM" id="CLU_051040_0_0_1"/>
<dbReference type="InParanoid" id="P53233"/>
<dbReference type="OMA" id="CSMLDFY"/>
<dbReference type="OrthoDB" id="4062651at2759"/>
<dbReference type="BioCyc" id="YEAST:G3O-30769-MONOMER"/>
<dbReference type="BioGRID-ORCS" id="852943">
    <property type="hits" value="0 hits in 13 CRISPR screens"/>
</dbReference>
<dbReference type="PRO" id="PR:P53233"/>
<dbReference type="Proteomes" id="UP000002311">
    <property type="component" value="Chromosome VII"/>
</dbReference>
<dbReference type="RNAct" id="P53233">
    <property type="molecule type" value="protein"/>
</dbReference>
<dbReference type="GO" id="GO:0005739">
    <property type="term" value="C:mitochondrion"/>
    <property type="evidence" value="ECO:0007005"/>
    <property type="project" value="SGD"/>
</dbReference>
<dbReference type="GO" id="GO:0005524">
    <property type="term" value="F:ATP binding"/>
    <property type="evidence" value="ECO:0007669"/>
    <property type="project" value="UniProtKB-KW"/>
</dbReference>
<dbReference type="GO" id="GO:0004672">
    <property type="term" value="F:protein kinase activity"/>
    <property type="evidence" value="ECO:0007005"/>
    <property type="project" value="SGD"/>
</dbReference>
<dbReference type="GO" id="GO:0106310">
    <property type="term" value="F:protein serine kinase activity"/>
    <property type="evidence" value="ECO:0007669"/>
    <property type="project" value="RHEA"/>
</dbReference>
<dbReference type="GO" id="GO:0004674">
    <property type="term" value="F:protein serine/threonine kinase activity"/>
    <property type="evidence" value="ECO:0007669"/>
    <property type="project" value="UniProtKB-KW"/>
</dbReference>
<dbReference type="FunFam" id="1.10.510.10:FF:001138">
    <property type="entry name" value="Fmp48p"/>
    <property type="match status" value="1"/>
</dbReference>
<dbReference type="Gene3D" id="1.10.510.10">
    <property type="entry name" value="Transferase(Phosphotransferase) domain 1"/>
    <property type="match status" value="1"/>
</dbReference>
<dbReference type="InterPro" id="IPR011009">
    <property type="entry name" value="Kinase-like_dom_sf"/>
</dbReference>
<dbReference type="InterPro" id="IPR000719">
    <property type="entry name" value="Prot_kinase_dom"/>
</dbReference>
<dbReference type="InterPro" id="IPR008271">
    <property type="entry name" value="Ser/Thr_kinase_AS"/>
</dbReference>
<dbReference type="PANTHER" id="PTHR44167">
    <property type="entry name" value="OVARIAN-SPECIFIC SERINE/THREONINE-PROTEIN KINASE LOK-RELATED"/>
    <property type="match status" value="1"/>
</dbReference>
<dbReference type="PANTHER" id="PTHR44167:SF30">
    <property type="entry name" value="PHOSPHORYLASE KINASE"/>
    <property type="match status" value="1"/>
</dbReference>
<dbReference type="Pfam" id="PF00069">
    <property type="entry name" value="Pkinase"/>
    <property type="match status" value="1"/>
</dbReference>
<dbReference type="SMART" id="SM00220">
    <property type="entry name" value="S_TKc"/>
    <property type="match status" value="1"/>
</dbReference>
<dbReference type="SUPFAM" id="SSF56112">
    <property type="entry name" value="Protein kinase-like (PK-like)"/>
    <property type="match status" value="1"/>
</dbReference>
<dbReference type="PROSITE" id="PS50011">
    <property type="entry name" value="PROTEIN_KINASE_DOM"/>
    <property type="match status" value="1"/>
</dbReference>
<dbReference type="PROSITE" id="PS00108">
    <property type="entry name" value="PROTEIN_KINASE_ST"/>
    <property type="match status" value="1"/>
</dbReference>
<gene>
    <name type="primary">FMP48</name>
    <name type="ordered locus">YGR052W</name>
</gene>
<name>FMP48_YEAST</name>
<evidence type="ECO:0000255" key="1">
    <source>
        <dbReference type="PROSITE-ProRule" id="PRU00159"/>
    </source>
</evidence>
<evidence type="ECO:0000255" key="2">
    <source>
        <dbReference type="PROSITE-ProRule" id="PRU10027"/>
    </source>
</evidence>
<evidence type="ECO:0000269" key="3">
    <source>
    </source>
</evidence>
<evidence type="ECO:0000269" key="4">
    <source>
    </source>
</evidence>
<evidence type="ECO:0000269" key="5">
    <source>
    </source>
</evidence>
<sequence>MYTKLRSIQSGTFSTVYKAWSTTHNRYVALKITPKYKTSEANMKNEYDVMKILSSCNPHPNICSMLDFYTDDSYYIMVLEYCECGDLYDFLDIAKSQGSPSSPSLIQIDMQKIIKQLCSAISFAHSLGIAHRDIKPENILLTINGDIKLADWGHAIQSPKSNDFQIGTDNYRAPETFSGRVSNSCFKKNFDRSSAPLYNTYQADYWSLGATIFYLMFGDCLFRVSKSKKVQHLKNFDEFEKDPFAFIYRKYVVPRLSCGYNDEEDLHVSLQHTRQYIWQDLPDIYDVFHLCKIMVDTLLKVSNAKERSMENFINEVDSAWNKDSSMDSCFSYQNKIDLFWEQWSVNTETVPAKFQLKNFEKPCLIQDGK</sequence>
<accession>P53233</accession>
<accession>D6VUI7</accession>
<feature type="chain" id="PRO_0000086113" description="Probable serine/threonine-protein kinase FMP48">
    <location>
        <begin position="1"/>
        <end position="369"/>
    </location>
</feature>
<feature type="domain" description="Protein kinase" evidence="1">
    <location>
        <begin position="2"/>
        <end position="369"/>
    </location>
</feature>
<feature type="active site" description="Proton acceptor" evidence="1 2">
    <location>
        <position position="133"/>
    </location>
</feature>
<feature type="binding site" evidence="1">
    <location>
        <begin position="8"/>
        <end position="16"/>
    </location>
    <ligand>
        <name>ATP</name>
        <dbReference type="ChEBI" id="CHEBI:30616"/>
    </ligand>
</feature>
<feature type="binding site" evidence="1">
    <location>
        <position position="31"/>
    </location>
    <ligand>
        <name>ATP</name>
        <dbReference type="ChEBI" id="CHEBI:30616"/>
    </ligand>
</feature>
<keyword id="KW-0067">ATP-binding</keyword>
<keyword id="KW-0418">Kinase</keyword>
<keyword id="KW-0496">Mitochondrion</keyword>
<keyword id="KW-0547">Nucleotide-binding</keyword>
<keyword id="KW-1185">Reference proteome</keyword>
<keyword id="KW-0723">Serine/threonine-protein kinase</keyword>
<keyword id="KW-0808">Transferase</keyword>